<keyword id="KW-0066">ATP synthesis</keyword>
<keyword id="KW-0997">Cell inner membrane</keyword>
<keyword id="KW-1003">Cell membrane</keyword>
<keyword id="KW-0138">CF(0)</keyword>
<keyword id="KW-0375">Hydrogen ion transport</keyword>
<keyword id="KW-0406">Ion transport</keyword>
<keyword id="KW-0472">Membrane</keyword>
<keyword id="KW-0812">Transmembrane</keyword>
<keyword id="KW-1133">Transmembrane helix</keyword>
<keyword id="KW-0813">Transport</keyword>
<feature type="chain" id="PRO_0000368554" description="ATP synthase subunit b">
    <location>
        <begin position="1"/>
        <end position="156"/>
    </location>
</feature>
<feature type="transmembrane region" description="Helical" evidence="1">
    <location>
        <begin position="5"/>
        <end position="25"/>
    </location>
</feature>
<comment type="function">
    <text evidence="1">F(1)F(0) ATP synthase produces ATP from ADP in the presence of a proton or sodium gradient. F-type ATPases consist of two structural domains, F(1) containing the extramembraneous catalytic core and F(0) containing the membrane proton channel, linked together by a central stalk and a peripheral stalk. During catalysis, ATP synthesis in the catalytic domain of F(1) is coupled via a rotary mechanism of the central stalk subunits to proton translocation.</text>
</comment>
<comment type="function">
    <text evidence="1">Component of the F(0) channel, it forms part of the peripheral stalk, linking F(1) to F(0).</text>
</comment>
<comment type="subunit">
    <text evidence="1">F-type ATPases have 2 components, F(1) - the catalytic core - and F(0) - the membrane proton channel. F(1) has five subunits: alpha(3), beta(3), gamma(1), delta(1), epsilon(1). F(0) has three main subunits: a(1), b(2) and c(10-14). The alpha and beta chains form an alternating ring which encloses part of the gamma chain. F(1) is attached to F(0) by a central stalk formed by the gamma and epsilon chains, while a peripheral stalk is formed by the delta and b chains.</text>
</comment>
<comment type="subcellular location">
    <subcellularLocation>
        <location evidence="1">Cell inner membrane</location>
        <topology evidence="1">Single-pass membrane protein</topology>
    </subcellularLocation>
</comment>
<comment type="similarity">
    <text evidence="1">Belongs to the ATPase B chain family.</text>
</comment>
<evidence type="ECO:0000255" key="1">
    <source>
        <dbReference type="HAMAP-Rule" id="MF_01398"/>
    </source>
</evidence>
<protein>
    <recommendedName>
        <fullName evidence="1">ATP synthase subunit b</fullName>
    </recommendedName>
    <alternativeName>
        <fullName evidence="1">ATP synthase F(0) sector subunit b</fullName>
    </alternativeName>
    <alternativeName>
        <fullName evidence="1">ATPase subunit I</fullName>
    </alternativeName>
    <alternativeName>
        <fullName evidence="1">F-type ATPase subunit b</fullName>
        <shortName evidence="1">F-ATPase subunit b</shortName>
    </alternativeName>
</protein>
<sequence>MDINLTLIVQMLVFAAFVLFTMKLVWPPLAKALEERQDKIADGLAAAERGRKELELAQHRVKDELKQAKAHSADIIDKANKRASEIIEAAKEAAKREAQIQAKLAQEQIAQQVNHAKEELRKQVAKLAITGAEKILMREVDAKANSELLDNLIEEI</sequence>
<proteinExistence type="inferred from homology"/>
<accession>Q5WSG4</accession>
<reference key="1">
    <citation type="journal article" date="2004" name="Nat. Genet.">
        <title>Evidence in the Legionella pneumophila genome for exploitation of host cell functions and high genome plasticity.</title>
        <authorList>
            <person name="Cazalet C."/>
            <person name="Rusniok C."/>
            <person name="Brueggemann H."/>
            <person name="Zidane N."/>
            <person name="Magnier A."/>
            <person name="Ma L."/>
            <person name="Tichit M."/>
            <person name="Jarraud S."/>
            <person name="Bouchier C."/>
            <person name="Vandenesch F."/>
            <person name="Kunst F."/>
            <person name="Etienne J."/>
            <person name="Glaser P."/>
            <person name="Buchrieser C."/>
        </authorList>
    </citation>
    <scope>NUCLEOTIDE SEQUENCE [LARGE SCALE GENOMIC DNA]</scope>
    <source>
        <strain>Lens</strain>
    </source>
</reference>
<gene>
    <name evidence="1" type="primary">atpF</name>
    <name type="ordered locus">lpl2914</name>
</gene>
<name>ATPF_LEGPL</name>
<dbReference type="EMBL" id="CR628337">
    <property type="protein sequence ID" value="CAH17158.1"/>
    <property type="molecule type" value="Genomic_DNA"/>
</dbReference>
<dbReference type="RefSeq" id="WP_010948670.1">
    <property type="nucleotide sequence ID" value="NC_006369.1"/>
</dbReference>
<dbReference type="SMR" id="Q5WSG4"/>
<dbReference type="KEGG" id="lpf:lpl2914"/>
<dbReference type="LegioList" id="lpl2914"/>
<dbReference type="HOGENOM" id="CLU_079215_4_5_6"/>
<dbReference type="Proteomes" id="UP000002517">
    <property type="component" value="Chromosome"/>
</dbReference>
<dbReference type="GO" id="GO:0005886">
    <property type="term" value="C:plasma membrane"/>
    <property type="evidence" value="ECO:0007669"/>
    <property type="project" value="UniProtKB-SubCell"/>
</dbReference>
<dbReference type="GO" id="GO:0045259">
    <property type="term" value="C:proton-transporting ATP synthase complex"/>
    <property type="evidence" value="ECO:0007669"/>
    <property type="project" value="UniProtKB-KW"/>
</dbReference>
<dbReference type="GO" id="GO:0046933">
    <property type="term" value="F:proton-transporting ATP synthase activity, rotational mechanism"/>
    <property type="evidence" value="ECO:0007669"/>
    <property type="project" value="UniProtKB-UniRule"/>
</dbReference>
<dbReference type="GO" id="GO:0046961">
    <property type="term" value="F:proton-transporting ATPase activity, rotational mechanism"/>
    <property type="evidence" value="ECO:0007669"/>
    <property type="project" value="TreeGrafter"/>
</dbReference>
<dbReference type="CDD" id="cd06503">
    <property type="entry name" value="ATP-synt_Fo_b"/>
    <property type="match status" value="1"/>
</dbReference>
<dbReference type="Gene3D" id="6.10.250.1580">
    <property type="match status" value="1"/>
</dbReference>
<dbReference type="HAMAP" id="MF_01398">
    <property type="entry name" value="ATP_synth_b_bprime"/>
    <property type="match status" value="1"/>
</dbReference>
<dbReference type="InterPro" id="IPR028987">
    <property type="entry name" value="ATP_synth_B-like_membr_sf"/>
</dbReference>
<dbReference type="InterPro" id="IPR002146">
    <property type="entry name" value="ATP_synth_b/b'su_bac/chlpt"/>
</dbReference>
<dbReference type="InterPro" id="IPR005864">
    <property type="entry name" value="ATP_synth_F0_bsu_bac"/>
</dbReference>
<dbReference type="InterPro" id="IPR050059">
    <property type="entry name" value="ATP_synthase_B_chain"/>
</dbReference>
<dbReference type="NCBIfam" id="TIGR01144">
    <property type="entry name" value="ATP_synt_b"/>
    <property type="match status" value="1"/>
</dbReference>
<dbReference type="NCBIfam" id="NF004411">
    <property type="entry name" value="PRK05759.1-2"/>
    <property type="match status" value="1"/>
</dbReference>
<dbReference type="PANTHER" id="PTHR33445:SF1">
    <property type="entry name" value="ATP SYNTHASE SUBUNIT B"/>
    <property type="match status" value="1"/>
</dbReference>
<dbReference type="PANTHER" id="PTHR33445">
    <property type="entry name" value="ATP SYNTHASE SUBUNIT B', CHLOROPLASTIC"/>
    <property type="match status" value="1"/>
</dbReference>
<dbReference type="Pfam" id="PF00430">
    <property type="entry name" value="ATP-synt_B"/>
    <property type="match status" value="1"/>
</dbReference>
<dbReference type="SUPFAM" id="SSF81573">
    <property type="entry name" value="F1F0 ATP synthase subunit B, membrane domain"/>
    <property type="match status" value="1"/>
</dbReference>
<organism>
    <name type="scientific">Legionella pneumophila (strain Lens)</name>
    <dbReference type="NCBI Taxonomy" id="297245"/>
    <lineage>
        <taxon>Bacteria</taxon>
        <taxon>Pseudomonadati</taxon>
        <taxon>Pseudomonadota</taxon>
        <taxon>Gammaproteobacteria</taxon>
        <taxon>Legionellales</taxon>
        <taxon>Legionellaceae</taxon>
        <taxon>Legionella</taxon>
    </lineage>
</organism>